<organism>
    <name type="scientific">Anaeromyxobacter dehalogenans (strain 2CP-C)</name>
    <dbReference type="NCBI Taxonomy" id="290397"/>
    <lineage>
        <taxon>Bacteria</taxon>
        <taxon>Pseudomonadati</taxon>
        <taxon>Myxococcota</taxon>
        <taxon>Myxococcia</taxon>
        <taxon>Myxococcales</taxon>
        <taxon>Cystobacterineae</taxon>
        <taxon>Anaeromyxobacteraceae</taxon>
        <taxon>Anaeromyxobacter</taxon>
    </lineage>
</organism>
<protein>
    <recommendedName>
        <fullName evidence="1">Histidine ammonia-lyase</fullName>
        <shortName evidence="1">Histidase</shortName>
        <ecNumber evidence="1">4.3.1.3</ecNumber>
    </recommendedName>
</protein>
<comment type="catalytic activity">
    <reaction evidence="1">
        <text>L-histidine = trans-urocanate + NH4(+)</text>
        <dbReference type="Rhea" id="RHEA:21232"/>
        <dbReference type="ChEBI" id="CHEBI:17771"/>
        <dbReference type="ChEBI" id="CHEBI:28938"/>
        <dbReference type="ChEBI" id="CHEBI:57595"/>
        <dbReference type="EC" id="4.3.1.3"/>
    </reaction>
</comment>
<comment type="pathway">
    <text evidence="1">Amino-acid degradation; L-histidine degradation into L-glutamate; N-formimidoyl-L-glutamate from L-histidine: step 1/3.</text>
</comment>
<comment type="subcellular location">
    <subcellularLocation>
        <location evidence="1">Cytoplasm</location>
    </subcellularLocation>
</comment>
<comment type="PTM">
    <text evidence="1">Contains an active site 4-methylidene-imidazol-5-one (MIO), which is formed autocatalytically by cyclization and dehydration of residues Ala-Ser-Gly.</text>
</comment>
<comment type="similarity">
    <text evidence="1">Belongs to the PAL/histidase family.</text>
</comment>
<gene>
    <name evidence="1" type="primary">hutH</name>
    <name type="ordered locus">Adeh_1814</name>
</gene>
<name>HUTH_ANADE</name>
<dbReference type="EC" id="4.3.1.3" evidence="1"/>
<dbReference type="EMBL" id="CP000251">
    <property type="protein sequence ID" value="ABC81586.1"/>
    <property type="molecule type" value="Genomic_DNA"/>
</dbReference>
<dbReference type="RefSeq" id="WP_011420869.1">
    <property type="nucleotide sequence ID" value="NC_007760.1"/>
</dbReference>
<dbReference type="SMR" id="Q2IIV4"/>
<dbReference type="STRING" id="290397.Adeh_1814"/>
<dbReference type="KEGG" id="ade:Adeh_1814"/>
<dbReference type="eggNOG" id="COG2986">
    <property type="taxonomic scope" value="Bacteria"/>
</dbReference>
<dbReference type="HOGENOM" id="CLU_014801_4_0_7"/>
<dbReference type="OrthoDB" id="9806955at2"/>
<dbReference type="UniPathway" id="UPA00379">
    <property type="reaction ID" value="UER00549"/>
</dbReference>
<dbReference type="Proteomes" id="UP000001935">
    <property type="component" value="Chromosome"/>
</dbReference>
<dbReference type="GO" id="GO:0005737">
    <property type="term" value="C:cytoplasm"/>
    <property type="evidence" value="ECO:0007669"/>
    <property type="project" value="UniProtKB-SubCell"/>
</dbReference>
<dbReference type="GO" id="GO:0004397">
    <property type="term" value="F:histidine ammonia-lyase activity"/>
    <property type="evidence" value="ECO:0007669"/>
    <property type="project" value="UniProtKB-UniRule"/>
</dbReference>
<dbReference type="GO" id="GO:0019556">
    <property type="term" value="P:L-histidine catabolic process to glutamate and formamide"/>
    <property type="evidence" value="ECO:0007669"/>
    <property type="project" value="UniProtKB-UniPathway"/>
</dbReference>
<dbReference type="GO" id="GO:0019557">
    <property type="term" value="P:L-histidine catabolic process to glutamate and formate"/>
    <property type="evidence" value="ECO:0007669"/>
    <property type="project" value="UniProtKB-UniPathway"/>
</dbReference>
<dbReference type="CDD" id="cd00332">
    <property type="entry name" value="PAL-HAL"/>
    <property type="match status" value="1"/>
</dbReference>
<dbReference type="FunFam" id="1.10.275.10:FF:000005">
    <property type="entry name" value="Histidine ammonia-lyase"/>
    <property type="match status" value="1"/>
</dbReference>
<dbReference type="FunFam" id="1.20.200.10:FF:000003">
    <property type="entry name" value="Histidine ammonia-lyase"/>
    <property type="match status" value="1"/>
</dbReference>
<dbReference type="Gene3D" id="1.20.200.10">
    <property type="entry name" value="Fumarase/aspartase (Central domain)"/>
    <property type="match status" value="1"/>
</dbReference>
<dbReference type="Gene3D" id="1.10.275.10">
    <property type="entry name" value="Fumarase/aspartase (N-terminal domain)"/>
    <property type="match status" value="1"/>
</dbReference>
<dbReference type="HAMAP" id="MF_00229">
    <property type="entry name" value="His_ammonia_lyase"/>
    <property type="match status" value="1"/>
</dbReference>
<dbReference type="InterPro" id="IPR001106">
    <property type="entry name" value="Aromatic_Lyase"/>
</dbReference>
<dbReference type="InterPro" id="IPR024083">
    <property type="entry name" value="Fumarase/histidase_N"/>
</dbReference>
<dbReference type="InterPro" id="IPR005921">
    <property type="entry name" value="HutH"/>
</dbReference>
<dbReference type="InterPro" id="IPR008948">
    <property type="entry name" value="L-Aspartase-like"/>
</dbReference>
<dbReference type="InterPro" id="IPR022313">
    <property type="entry name" value="Phe/His_NH3-lyase_AS"/>
</dbReference>
<dbReference type="NCBIfam" id="TIGR01225">
    <property type="entry name" value="hutH"/>
    <property type="match status" value="1"/>
</dbReference>
<dbReference type="NCBIfam" id="NF006871">
    <property type="entry name" value="PRK09367.1"/>
    <property type="match status" value="1"/>
</dbReference>
<dbReference type="PANTHER" id="PTHR10362">
    <property type="entry name" value="HISTIDINE AMMONIA-LYASE"/>
    <property type="match status" value="1"/>
</dbReference>
<dbReference type="Pfam" id="PF00221">
    <property type="entry name" value="Lyase_aromatic"/>
    <property type="match status" value="1"/>
</dbReference>
<dbReference type="SUPFAM" id="SSF48557">
    <property type="entry name" value="L-aspartase-like"/>
    <property type="match status" value="1"/>
</dbReference>
<dbReference type="PROSITE" id="PS00488">
    <property type="entry name" value="PAL_HISTIDASE"/>
    <property type="match status" value="1"/>
</dbReference>
<evidence type="ECO:0000255" key="1">
    <source>
        <dbReference type="HAMAP-Rule" id="MF_00229"/>
    </source>
</evidence>
<accession>Q2IIV4</accession>
<sequence>METLLLDGETLTLEQVRAVATGAARAALAPAARERVRRSRALVDARLEDGEAHYGINTGFGTLAEVRIPRADLERLQRNLVLSHAAGVGAPLPLAEARALVLLRANVLAKGVSGIRERTLELLLAMLERGVVPVVPERGSVGASGDLAPLAHLALVLIGDGEAFLAPPGAAAPPERLPGGEALRRAGLEPVVLQPKEGLALVNGTQAMAAVGTLALLRAERLAALADLAGAMTLEGLLGSHRPFAPEIQAARGQPGQIEAAAHLRALLAGSELNASHQGPGCHKVQDPYSLRCMPQVHGAARDGIGFCRGVLAREVNAATDNPLVFPDTGEIVSGGNFHGQPVALALDVLAVAASHLAAISERRVEQLVNPSLSGLPPFLAPQHGLNSGFMIAQVTSAALVSENKVLCHPASVDSIPSSAGREDHVSMGMTAALKARQVVENVRTCLAIELLVAAQALDLRAPLRPAQRVADAHARLRERVPHLSEDRALYRDIEAVSRLVDEGALEL</sequence>
<proteinExistence type="inferred from homology"/>
<reference key="1">
    <citation type="submission" date="2006-01" db="EMBL/GenBank/DDBJ databases">
        <title>Complete sequence of Anaeromyxobacter dehalogenans 2CP-C.</title>
        <authorList>
            <person name="Copeland A."/>
            <person name="Lucas S."/>
            <person name="Lapidus A."/>
            <person name="Barry K."/>
            <person name="Detter J.C."/>
            <person name="Glavina T."/>
            <person name="Hammon N."/>
            <person name="Israni S."/>
            <person name="Pitluck S."/>
            <person name="Brettin T."/>
            <person name="Bruce D."/>
            <person name="Han C."/>
            <person name="Tapia R."/>
            <person name="Gilna P."/>
            <person name="Kiss H."/>
            <person name="Schmutz J."/>
            <person name="Larimer F."/>
            <person name="Land M."/>
            <person name="Kyrpides N."/>
            <person name="Anderson I."/>
            <person name="Sanford R.A."/>
            <person name="Ritalahti K.M."/>
            <person name="Thomas H.S."/>
            <person name="Kirby J.R."/>
            <person name="Zhulin I.B."/>
            <person name="Loeffler F.E."/>
            <person name="Richardson P."/>
        </authorList>
    </citation>
    <scope>NUCLEOTIDE SEQUENCE [LARGE SCALE GENOMIC DNA]</scope>
    <source>
        <strain>2CP-C</strain>
    </source>
</reference>
<keyword id="KW-0963">Cytoplasm</keyword>
<keyword id="KW-0369">Histidine metabolism</keyword>
<keyword id="KW-0456">Lyase</keyword>
<keyword id="KW-1185">Reference proteome</keyword>
<feature type="chain" id="PRO_0000336582" description="Histidine ammonia-lyase">
    <location>
        <begin position="1"/>
        <end position="508"/>
    </location>
</feature>
<feature type="modified residue" description="2,3-didehydroalanine (Ser)" evidence="1">
    <location>
        <position position="144"/>
    </location>
</feature>
<feature type="cross-link" description="5-imidazolinone (Ala-Gly)" evidence="1">
    <location>
        <begin position="143"/>
        <end position="145"/>
    </location>
</feature>